<keyword id="KW-0687">Ribonucleoprotein</keyword>
<keyword id="KW-0689">Ribosomal protein</keyword>
<keyword id="KW-0694">RNA-binding</keyword>
<keyword id="KW-0699">rRNA-binding</keyword>
<accession>P61068</accession>
<protein>
    <recommendedName>
        <fullName evidence="1">Large ribosomal subunit protein uL4</fullName>
    </recommendedName>
    <alternativeName>
        <fullName evidence="2">50S ribosomal protein L4</fullName>
    </alternativeName>
    <alternativeName>
        <fullName>RRP-L4</fullName>
    </alternativeName>
</protein>
<name>RL4_RHOPA</name>
<organism>
    <name type="scientific">Rhodopseudomonas palustris (strain ATCC BAA-98 / CGA009)</name>
    <dbReference type="NCBI Taxonomy" id="258594"/>
    <lineage>
        <taxon>Bacteria</taxon>
        <taxon>Pseudomonadati</taxon>
        <taxon>Pseudomonadota</taxon>
        <taxon>Alphaproteobacteria</taxon>
        <taxon>Hyphomicrobiales</taxon>
        <taxon>Nitrobacteraceae</taxon>
        <taxon>Rhodopseudomonas</taxon>
    </lineage>
</organism>
<dbReference type="EMBL" id="BX572603">
    <property type="protein sequence ID" value="CAE28690.1"/>
    <property type="molecule type" value="Genomic_DNA"/>
</dbReference>
<dbReference type="RefSeq" id="WP_011158794.1">
    <property type="nucleotide sequence ID" value="NZ_CP116810.1"/>
</dbReference>
<dbReference type="SMR" id="P61068"/>
<dbReference type="IntAct" id="P61068">
    <property type="interactions" value="1"/>
</dbReference>
<dbReference type="STRING" id="258594.RPA3249"/>
<dbReference type="GeneID" id="66894335"/>
<dbReference type="eggNOG" id="COG0088">
    <property type="taxonomic scope" value="Bacteria"/>
</dbReference>
<dbReference type="HOGENOM" id="CLU_041575_5_1_5"/>
<dbReference type="PhylomeDB" id="P61068"/>
<dbReference type="GO" id="GO:1990904">
    <property type="term" value="C:ribonucleoprotein complex"/>
    <property type="evidence" value="ECO:0007669"/>
    <property type="project" value="UniProtKB-KW"/>
</dbReference>
<dbReference type="GO" id="GO:0005840">
    <property type="term" value="C:ribosome"/>
    <property type="evidence" value="ECO:0007669"/>
    <property type="project" value="UniProtKB-KW"/>
</dbReference>
<dbReference type="GO" id="GO:0019843">
    <property type="term" value="F:rRNA binding"/>
    <property type="evidence" value="ECO:0007669"/>
    <property type="project" value="UniProtKB-UniRule"/>
</dbReference>
<dbReference type="GO" id="GO:0003735">
    <property type="term" value="F:structural constituent of ribosome"/>
    <property type="evidence" value="ECO:0007669"/>
    <property type="project" value="InterPro"/>
</dbReference>
<dbReference type="GO" id="GO:0006412">
    <property type="term" value="P:translation"/>
    <property type="evidence" value="ECO:0007669"/>
    <property type="project" value="UniProtKB-UniRule"/>
</dbReference>
<dbReference type="Gene3D" id="3.40.1370.10">
    <property type="match status" value="1"/>
</dbReference>
<dbReference type="HAMAP" id="MF_01328_B">
    <property type="entry name" value="Ribosomal_uL4_B"/>
    <property type="match status" value="1"/>
</dbReference>
<dbReference type="InterPro" id="IPR002136">
    <property type="entry name" value="Ribosomal_uL4"/>
</dbReference>
<dbReference type="InterPro" id="IPR013005">
    <property type="entry name" value="Ribosomal_uL4-like"/>
</dbReference>
<dbReference type="InterPro" id="IPR023574">
    <property type="entry name" value="Ribosomal_uL4_dom_sf"/>
</dbReference>
<dbReference type="NCBIfam" id="TIGR03953">
    <property type="entry name" value="rplD_bact"/>
    <property type="match status" value="1"/>
</dbReference>
<dbReference type="PANTHER" id="PTHR10746">
    <property type="entry name" value="50S RIBOSOMAL PROTEIN L4"/>
    <property type="match status" value="1"/>
</dbReference>
<dbReference type="PANTHER" id="PTHR10746:SF6">
    <property type="entry name" value="LARGE RIBOSOMAL SUBUNIT PROTEIN UL4M"/>
    <property type="match status" value="1"/>
</dbReference>
<dbReference type="Pfam" id="PF00573">
    <property type="entry name" value="Ribosomal_L4"/>
    <property type="match status" value="1"/>
</dbReference>
<dbReference type="SUPFAM" id="SSF52166">
    <property type="entry name" value="Ribosomal protein L4"/>
    <property type="match status" value="1"/>
</dbReference>
<reference key="1">
    <citation type="journal article" date="2004" name="Nat. Biotechnol.">
        <title>Complete genome sequence of the metabolically versatile photosynthetic bacterium Rhodopseudomonas palustris.</title>
        <authorList>
            <person name="Larimer F.W."/>
            <person name="Chain P."/>
            <person name="Hauser L."/>
            <person name="Lamerdin J.E."/>
            <person name="Malfatti S."/>
            <person name="Do L."/>
            <person name="Land M.L."/>
            <person name="Pelletier D.A."/>
            <person name="Beatty J.T."/>
            <person name="Lang A.S."/>
            <person name="Tabita F.R."/>
            <person name="Gibson J.L."/>
            <person name="Hanson T.E."/>
            <person name="Bobst C."/>
            <person name="Torres y Torres J.L."/>
            <person name="Peres C."/>
            <person name="Harrison F.H."/>
            <person name="Gibson J."/>
            <person name="Harwood C.S."/>
        </authorList>
    </citation>
    <scope>NUCLEOTIDE SEQUENCE [LARGE SCALE GENOMIC DNA]</scope>
    <source>
        <strain>ATCC BAA-98 / CGA009</strain>
    </source>
</reference>
<reference key="2">
    <citation type="journal article" date="2004" name="J. Proteome Res.">
        <title>Characterization of the 70S ribosome from Rhodopseudomonas palustris using an integrated 'top-down' and 'bottom-up' mass spectrometric approach.</title>
        <authorList>
            <person name="Strader M.B."/>
            <person name="VerBerkmoes N.C."/>
            <person name="Tabb D.L."/>
            <person name="Connelly H.M."/>
            <person name="Barton J.W."/>
            <person name="Bruce B.D."/>
            <person name="Pelletier D.A."/>
            <person name="Davison B.H."/>
            <person name="Hettich R.L."/>
            <person name="Larimer F.W."/>
            <person name="Hurst G.B."/>
        </authorList>
    </citation>
    <scope>IDENTIFICATION BY MASS SPECTROMETRY</scope>
    <source>
        <strain>ATCC BAA-98 / CGA009</strain>
    </source>
</reference>
<feature type="chain" id="PRO_0000129266" description="Large ribosomal subunit protein uL4">
    <location>
        <begin position="1"/>
        <end position="206"/>
    </location>
</feature>
<comment type="function">
    <text evidence="1">One of the primary rRNA binding proteins, this protein initially binds near the 5'-end of the 23S rRNA. It is important during the early stages of 50S assembly. It makes multiple contacts with different domains of the 23S rRNA in the assembled 50S subunit and ribosome.</text>
</comment>
<comment type="function">
    <text evidence="1">Forms part of the polypeptide exit tunnel.</text>
</comment>
<comment type="subunit">
    <text evidence="1">Part of the 50S ribosomal subunit.</text>
</comment>
<comment type="similarity">
    <text evidence="1">Belongs to the universal ribosomal protein uL4 family.</text>
</comment>
<gene>
    <name evidence="1" type="primary">rplD</name>
    <name type="ordered locus">RPA3249</name>
</gene>
<proteinExistence type="evidence at protein level"/>
<sequence>MELKVTTLEGKEAGSVQLSDEIFGLEPRSDIIQRCVIWQLAKRQAGTHKAKGRAEVWRTGKKMYKQKGTGGARHGSQRVPQFRGGGRAFGPVVRSHAIDLPKKVRVLALRHALSAKAKGGGLIVLDKAELEAAKTKTLVGHFSGLGLESALIIDGAEVNNGFAAAARNIPNIDVLPVQGINVYDILRRKKLVLTKAAVDALEARFK</sequence>
<evidence type="ECO:0000255" key="1">
    <source>
        <dbReference type="HAMAP-Rule" id="MF_01328"/>
    </source>
</evidence>
<evidence type="ECO:0000305" key="2"/>